<name>DHSC_SALTY</name>
<reference key="1">
    <citation type="journal article" date="2001" name="Nature">
        <title>Complete genome sequence of Salmonella enterica serovar Typhimurium LT2.</title>
        <authorList>
            <person name="McClelland M."/>
            <person name="Sanderson K.E."/>
            <person name="Spieth J."/>
            <person name="Clifton S.W."/>
            <person name="Latreille P."/>
            <person name="Courtney L."/>
            <person name="Porwollik S."/>
            <person name="Ali J."/>
            <person name="Dante M."/>
            <person name="Du F."/>
            <person name="Hou S."/>
            <person name="Layman D."/>
            <person name="Leonard S."/>
            <person name="Nguyen C."/>
            <person name="Scott K."/>
            <person name="Holmes A."/>
            <person name="Grewal N."/>
            <person name="Mulvaney E."/>
            <person name="Ryan E."/>
            <person name="Sun H."/>
            <person name="Florea L."/>
            <person name="Miller W."/>
            <person name="Stoneking T."/>
            <person name="Nhan M."/>
            <person name="Waterston R."/>
            <person name="Wilson R.K."/>
        </authorList>
    </citation>
    <scope>NUCLEOTIDE SEQUENCE [LARGE SCALE GENOMIC DNA]</scope>
    <source>
        <strain>LT2 / SGSC1412 / ATCC 700720</strain>
    </source>
</reference>
<gene>
    <name type="primary">sdhC</name>
    <name type="ordered locus">STM0732</name>
</gene>
<sequence>MIRNVKKQRPVNLDLQTIRFPITAIASILHRVSGVITFIAVGILLWLLGTSLSSPEGFQQAADIMDGFIVKFIMWGILTALAYHVIVGIRHMLMDFGYLEETFEAGQRSAKISFVITVVLSLLAGVLVW</sequence>
<dbReference type="EMBL" id="AE006468">
    <property type="protein sequence ID" value="AAL19676.1"/>
    <property type="molecule type" value="Genomic_DNA"/>
</dbReference>
<dbReference type="RefSeq" id="NP_459717.1">
    <property type="nucleotide sequence ID" value="NC_003197.2"/>
</dbReference>
<dbReference type="RefSeq" id="WP_001539490.1">
    <property type="nucleotide sequence ID" value="NC_003197.2"/>
</dbReference>
<dbReference type="SMR" id="P63725"/>
<dbReference type="STRING" id="99287.STM0732"/>
<dbReference type="PaxDb" id="99287-STM0732"/>
<dbReference type="GeneID" id="1252252"/>
<dbReference type="KEGG" id="stm:STM0732"/>
<dbReference type="PATRIC" id="fig|99287.12.peg.764"/>
<dbReference type="HOGENOM" id="CLU_094691_2_1_6"/>
<dbReference type="OMA" id="YHLVAGI"/>
<dbReference type="PhylomeDB" id="P63725"/>
<dbReference type="BioCyc" id="SENT99287:STM0732-MONOMER"/>
<dbReference type="UniPathway" id="UPA00223"/>
<dbReference type="Proteomes" id="UP000001014">
    <property type="component" value="Chromosome"/>
</dbReference>
<dbReference type="GO" id="GO:0005886">
    <property type="term" value="C:plasma membrane"/>
    <property type="evidence" value="ECO:0000318"/>
    <property type="project" value="GO_Central"/>
</dbReference>
<dbReference type="GO" id="GO:0009055">
    <property type="term" value="F:electron transfer activity"/>
    <property type="evidence" value="ECO:0007669"/>
    <property type="project" value="InterPro"/>
</dbReference>
<dbReference type="GO" id="GO:0046872">
    <property type="term" value="F:metal ion binding"/>
    <property type="evidence" value="ECO:0007669"/>
    <property type="project" value="UniProtKB-KW"/>
</dbReference>
<dbReference type="GO" id="GO:0006099">
    <property type="term" value="P:tricarboxylic acid cycle"/>
    <property type="evidence" value="ECO:0007669"/>
    <property type="project" value="UniProtKB-UniPathway"/>
</dbReference>
<dbReference type="CDD" id="cd03499">
    <property type="entry name" value="SQR_TypeC_SdhC"/>
    <property type="match status" value="1"/>
</dbReference>
<dbReference type="FunFam" id="1.20.1300.10:FF:000005">
    <property type="entry name" value="Succinate dehydrogenase cytochrome b556 subunit"/>
    <property type="match status" value="1"/>
</dbReference>
<dbReference type="Gene3D" id="1.20.1300.10">
    <property type="entry name" value="Fumarate reductase/succinate dehydrogenase, transmembrane subunit"/>
    <property type="match status" value="1"/>
</dbReference>
<dbReference type="InterPro" id="IPR034804">
    <property type="entry name" value="SQR/QFR_C/D"/>
</dbReference>
<dbReference type="InterPro" id="IPR018495">
    <property type="entry name" value="Succ_DH_cyt_bsu_CS"/>
</dbReference>
<dbReference type="InterPro" id="IPR014314">
    <property type="entry name" value="Succ_DH_cytb556"/>
</dbReference>
<dbReference type="InterPro" id="IPR000701">
    <property type="entry name" value="SuccDH_FuR_B_TM-su"/>
</dbReference>
<dbReference type="NCBIfam" id="NF007021">
    <property type="entry name" value="PRK09487.1"/>
    <property type="match status" value="1"/>
</dbReference>
<dbReference type="NCBIfam" id="TIGR02970">
    <property type="entry name" value="succ_dehyd_cytB"/>
    <property type="match status" value="1"/>
</dbReference>
<dbReference type="PANTHER" id="PTHR10978">
    <property type="entry name" value="SUCCINATE DEHYDROGENASE CYTOCHROME B560 SUBUNIT"/>
    <property type="match status" value="1"/>
</dbReference>
<dbReference type="PANTHER" id="PTHR10978:SF5">
    <property type="entry name" value="SUCCINATE DEHYDROGENASE CYTOCHROME B560 SUBUNIT, MITOCHONDRIAL"/>
    <property type="match status" value="1"/>
</dbReference>
<dbReference type="Pfam" id="PF01127">
    <property type="entry name" value="Sdh_cyt"/>
    <property type="match status" value="1"/>
</dbReference>
<dbReference type="PIRSF" id="PIRSF000178">
    <property type="entry name" value="SDH_cyt_b560"/>
    <property type="match status" value="1"/>
</dbReference>
<dbReference type="SUPFAM" id="SSF81343">
    <property type="entry name" value="Fumarate reductase respiratory complex transmembrane subunits"/>
    <property type="match status" value="1"/>
</dbReference>
<dbReference type="PROSITE" id="PS01000">
    <property type="entry name" value="SDH_CYT_1"/>
    <property type="match status" value="1"/>
</dbReference>
<dbReference type="PROSITE" id="PS01001">
    <property type="entry name" value="SDH_CYT_2"/>
    <property type="match status" value="1"/>
</dbReference>
<feature type="chain" id="PRO_0000203516" description="Succinate dehydrogenase cytochrome b556 subunit">
    <location>
        <begin position="1"/>
        <end position="129"/>
    </location>
</feature>
<feature type="topological domain" description="Cytoplasmic" evidence="1">
    <location>
        <begin position="1"/>
        <end position="26"/>
    </location>
</feature>
<feature type="transmembrane region" description="Helical" evidence="1">
    <location>
        <begin position="27"/>
        <end position="52"/>
    </location>
</feature>
<feature type="topological domain" description="Periplasmic" evidence="1">
    <location>
        <begin position="53"/>
        <end position="68"/>
    </location>
</feature>
<feature type="transmembrane region" description="Helical" evidence="1">
    <location>
        <begin position="69"/>
        <end position="89"/>
    </location>
</feature>
<feature type="topological domain" description="Cytoplasmic" evidence="1">
    <location>
        <begin position="90"/>
        <end position="108"/>
    </location>
</feature>
<feature type="transmembrane region" description="Helical" evidence="1">
    <location>
        <begin position="109"/>
        <end position="129"/>
    </location>
</feature>
<feature type="binding site" description="axial binding residue" evidence="1">
    <location>
        <position position="84"/>
    </location>
    <ligand>
        <name>heme</name>
        <dbReference type="ChEBI" id="CHEBI:30413"/>
        <note>ligand shared with second transmembrane subunit</note>
    </ligand>
    <ligandPart>
        <name>Fe</name>
        <dbReference type="ChEBI" id="CHEBI:18248"/>
    </ligandPart>
</feature>
<proteinExistence type="inferred from homology"/>
<evidence type="ECO:0000250" key="1"/>
<evidence type="ECO:0000305" key="2"/>
<accession>P63725</accession>
<accession>Q8XG40</accession>
<protein>
    <recommendedName>
        <fullName>Succinate dehydrogenase cytochrome b556 subunit</fullName>
        <shortName>Cytochrome b-556</shortName>
    </recommendedName>
</protein>
<keyword id="KW-0997">Cell inner membrane</keyword>
<keyword id="KW-1003">Cell membrane</keyword>
<keyword id="KW-0249">Electron transport</keyword>
<keyword id="KW-0349">Heme</keyword>
<keyword id="KW-0408">Iron</keyword>
<keyword id="KW-0472">Membrane</keyword>
<keyword id="KW-0479">Metal-binding</keyword>
<keyword id="KW-1185">Reference proteome</keyword>
<keyword id="KW-0812">Transmembrane</keyword>
<keyword id="KW-1133">Transmembrane helix</keyword>
<keyword id="KW-0813">Transport</keyword>
<keyword id="KW-0816">Tricarboxylic acid cycle</keyword>
<comment type="function">
    <text evidence="1">Membrane-anchoring subunit of succinate dehydrogenase (SDH).</text>
</comment>
<comment type="cofactor">
    <cofactor evidence="1">
        <name>heme</name>
        <dbReference type="ChEBI" id="CHEBI:30413"/>
    </cofactor>
    <text evidence="1">The heme is bound between the two transmembrane subunits.</text>
</comment>
<comment type="pathway">
    <text>Carbohydrate metabolism; tricarboxylic acid cycle.</text>
</comment>
<comment type="subunit">
    <text evidence="1">Part of an enzyme complex containing four subunits: a flavoprotein, an iron-sulfur protein, plus two membrane-anchoring proteins, SdhC and SdhD. The complex can form homotrimers (By similarity).</text>
</comment>
<comment type="subcellular location">
    <subcellularLocation>
        <location>Cell inner membrane</location>
        <topology>Multi-pass membrane protein</topology>
    </subcellularLocation>
</comment>
<comment type="similarity">
    <text evidence="2">Belongs to the cytochrome b560 family.</text>
</comment>
<organism>
    <name type="scientific">Salmonella typhimurium (strain LT2 / SGSC1412 / ATCC 700720)</name>
    <dbReference type="NCBI Taxonomy" id="99287"/>
    <lineage>
        <taxon>Bacteria</taxon>
        <taxon>Pseudomonadati</taxon>
        <taxon>Pseudomonadota</taxon>
        <taxon>Gammaproteobacteria</taxon>
        <taxon>Enterobacterales</taxon>
        <taxon>Enterobacteriaceae</taxon>
        <taxon>Salmonella</taxon>
    </lineage>
</organism>